<feature type="chain" id="PRO_1000092528" description="Transcription antitermination protein NusB">
    <location>
        <begin position="1"/>
        <end position="171"/>
    </location>
</feature>
<reference key="1">
    <citation type="journal article" date="2008" name="PLoS ONE">
        <title>Genome sequence of Brucella abortus vaccine strain S19 compared to virulent strains yields candidate virulence genes.</title>
        <authorList>
            <person name="Crasta O.R."/>
            <person name="Folkerts O."/>
            <person name="Fei Z."/>
            <person name="Mane S.P."/>
            <person name="Evans C."/>
            <person name="Martino-Catt S."/>
            <person name="Bricker B."/>
            <person name="Yu G."/>
            <person name="Du L."/>
            <person name="Sobral B.W."/>
        </authorList>
    </citation>
    <scope>NUCLEOTIDE SEQUENCE [LARGE SCALE GENOMIC DNA]</scope>
    <source>
        <strain>S19</strain>
    </source>
</reference>
<comment type="function">
    <text evidence="1">Involved in transcription antitermination. Required for transcription of ribosomal RNA (rRNA) genes. Binds specifically to the boxA antiterminator sequence of the ribosomal RNA (rrn) operons.</text>
</comment>
<comment type="similarity">
    <text evidence="1">Belongs to the NusB family.</text>
</comment>
<gene>
    <name evidence="1" type="primary">nusB</name>
    <name type="ordered locus">BAbS19_I07410</name>
</gene>
<sequence>MNSIPEGRPTPNLPRTANKRGVARLAAVQALFQMDVAGTGVMEVVAEYEAFRLGKEVDGTQYLDADPQWFRAIVAGVVEDQLKLDPMIHQALTEDWPLSRLDSTLRAILRAGAWELKARKDVPTAVIVSEYVDIAKAFYTEDEPKLVNAVLDRLALVIRGESRGAKPRHKS</sequence>
<evidence type="ECO:0000255" key="1">
    <source>
        <dbReference type="HAMAP-Rule" id="MF_00073"/>
    </source>
</evidence>
<organism>
    <name type="scientific">Brucella abortus (strain S19)</name>
    <dbReference type="NCBI Taxonomy" id="430066"/>
    <lineage>
        <taxon>Bacteria</taxon>
        <taxon>Pseudomonadati</taxon>
        <taxon>Pseudomonadota</taxon>
        <taxon>Alphaproteobacteria</taxon>
        <taxon>Hyphomicrobiales</taxon>
        <taxon>Brucellaceae</taxon>
        <taxon>Brucella/Ochrobactrum group</taxon>
        <taxon>Brucella</taxon>
    </lineage>
</organism>
<protein>
    <recommendedName>
        <fullName evidence="1">Transcription antitermination protein NusB</fullName>
    </recommendedName>
    <alternativeName>
        <fullName evidence="1">Antitermination factor NusB</fullName>
    </alternativeName>
</protein>
<proteinExistence type="inferred from homology"/>
<accession>B2S518</accession>
<dbReference type="EMBL" id="CP000887">
    <property type="protein sequence ID" value="ACD72265.1"/>
    <property type="molecule type" value="Genomic_DNA"/>
</dbReference>
<dbReference type="RefSeq" id="WP_002963907.1">
    <property type="nucleotide sequence ID" value="NC_010742.1"/>
</dbReference>
<dbReference type="SMR" id="B2S518"/>
<dbReference type="GeneID" id="93016840"/>
<dbReference type="KEGG" id="bmc:BAbS19_I07410"/>
<dbReference type="HOGENOM" id="CLU_087843_4_0_5"/>
<dbReference type="Proteomes" id="UP000002565">
    <property type="component" value="Chromosome 1"/>
</dbReference>
<dbReference type="GO" id="GO:0005829">
    <property type="term" value="C:cytosol"/>
    <property type="evidence" value="ECO:0007669"/>
    <property type="project" value="TreeGrafter"/>
</dbReference>
<dbReference type="GO" id="GO:0003723">
    <property type="term" value="F:RNA binding"/>
    <property type="evidence" value="ECO:0007669"/>
    <property type="project" value="UniProtKB-UniRule"/>
</dbReference>
<dbReference type="GO" id="GO:0006353">
    <property type="term" value="P:DNA-templated transcription termination"/>
    <property type="evidence" value="ECO:0007669"/>
    <property type="project" value="UniProtKB-UniRule"/>
</dbReference>
<dbReference type="GO" id="GO:0031564">
    <property type="term" value="P:transcription antitermination"/>
    <property type="evidence" value="ECO:0007669"/>
    <property type="project" value="UniProtKB-KW"/>
</dbReference>
<dbReference type="Gene3D" id="1.10.940.10">
    <property type="entry name" value="NusB-like"/>
    <property type="match status" value="1"/>
</dbReference>
<dbReference type="HAMAP" id="MF_00073">
    <property type="entry name" value="NusB"/>
    <property type="match status" value="1"/>
</dbReference>
<dbReference type="InterPro" id="IPR035926">
    <property type="entry name" value="NusB-like_sf"/>
</dbReference>
<dbReference type="InterPro" id="IPR011605">
    <property type="entry name" value="NusB_fam"/>
</dbReference>
<dbReference type="InterPro" id="IPR006027">
    <property type="entry name" value="NusB_RsmB_TIM44"/>
</dbReference>
<dbReference type="NCBIfam" id="TIGR01951">
    <property type="entry name" value="nusB"/>
    <property type="match status" value="1"/>
</dbReference>
<dbReference type="PANTHER" id="PTHR11078:SF3">
    <property type="entry name" value="ANTITERMINATION NUSB DOMAIN-CONTAINING PROTEIN"/>
    <property type="match status" value="1"/>
</dbReference>
<dbReference type="PANTHER" id="PTHR11078">
    <property type="entry name" value="N UTILIZATION SUBSTANCE PROTEIN B-RELATED"/>
    <property type="match status" value="1"/>
</dbReference>
<dbReference type="Pfam" id="PF01029">
    <property type="entry name" value="NusB"/>
    <property type="match status" value="1"/>
</dbReference>
<dbReference type="SUPFAM" id="SSF48013">
    <property type="entry name" value="NusB-like"/>
    <property type="match status" value="1"/>
</dbReference>
<name>NUSB_BRUA1</name>
<keyword id="KW-0694">RNA-binding</keyword>
<keyword id="KW-0804">Transcription</keyword>
<keyword id="KW-0889">Transcription antitermination</keyword>
<keyword id="KW-0805">Transcription regulation</keyword>